<protein>
    <recommendedName>
        <fullName evidence="1">Galactose-6-phosphate isomerase subunit LacB</fullName>
        <ecNumber evidence="1">5.3.1.26</ecNumber>
    </recommendedName>
</protein>
<accession>A6U3S4</accession>
<reference key="1">
    <citation type="submission" date="2007-06" db="EMBL/GenBank/DDBJ databases">
        <title>Complete sequence of chromosome of Staphylococcus aureus subsp. aureus JH1.</title>
        <authorList>
            <consortium name="US DOE Joint Genome Institute"/>
            <person name="Copeland A."/>
            <person name="Lucas S."/>
            <person name="Lapidus A."/>
            <person name="Barry K."/>
            <person name="Detter J.C."/>
            <person name="Glavina del Rio T."/>
            <person name="Hammon N."/>
            <person name="Israni S."/>
            <person name="Dalin E."/>
            <person name="Tice H."/>
            <person name="Pitluck S."/>
            <person name="Chain P."/>
            <person name="Malfatti S."/>
            <person name="Shin M."/>
            <person name="Vergez L."/>
            <person name="Schmutz J."/>
            <person name="Larimer F."/>
            <person name="Land M."/>
            <person name="Hauser L."/>
            <person name="Kyrpides N."/>
            <person name="Ivanova N."/>
            <person name="Tomasz A."/>
            <person name="Richardson P."/>
        </authorList>
    </citation>
    <scope>NUCLEOTIDE SEQUENCE [LARGE SCALE GENOMIC DNA]</scope>
    <source>
        <strain>JH1</strain>
    </source>
</reference>
<gene>
    <name evidence="1" type="primary">lacB</name>
    <name type="ordered locus">SaurJH1_2264</name>
</gene>
<keyword id="KW-0413">Isomerase</keyword>
<keyword id="KW-0423">Lactose metabolism</keyword>
<evidence type="ECO:0000255" key="1">
    <source>
        <dbReference type="HAMAP-Rule" id="MF_01556"/>
    </source>
</evidence>
<name>LACB_STAA2</name>
<feature type="chain" id="PRO_1000087787" description="Galactose-6-phosphate isomerase subunit LacB">
    <location>
        <begin position="1"/>
        <end position="171"/>
    </location>
</feature>
<sequence length="171" mass="18925">MKIALGCDHIVTDTKMRVSEFLKSKGHEVIDVGTYDFTRTHYPIFGKKVGEQVVSGNADLGVCICGTGVGINNAVNKVPGVRSALVRDMTSALYAKEELNANVIGFGGRIIGELLMCDIIDAFINAEYKATEENKKLIAKIKHLETSNADQADPHFFDEFLEKWDRGEYHD</sequence>
<dbReference type="EC" id="5.3.1.26" evidence="1"/>
<dbReference type="EMBL" id="CP000736">
    <property type="protein sequence ID" value="ABR53092.1"/>
    <property type="molecule type" value="Genomic_DNA"/>
</dbReference>
<dbReference type="SMR" id="A6U3S4"/>
<dbReference type="KEGG" id="sah:SaurJH1_2264"/>
<dbReference type="HOGENOM" id="CLU_091396_2_0_9"/>
<dbReference type="UniPathway" id="UPA00702">
    <property type="reaction ID" value="UER00714"/>
</dbReference>
<dbReference type="GO" id="GO:0050044">
    <property type="term" value="F:galactose-6-phosphate isomerase activity"/>
    <property type="evidence" value="ECO:0007669"/>
    <property type="project" value="UniProtKB-UniRule"/>
</dbReference>
<dbReference type="GO" id="GO:0004751">
    <property type="term" value="F:ribose-5-phosphate isomerase activity"/>
    <property type="evidence" value="ECO:0007669"/>
    <property type="project" value="TreeGrafter"/>
</dbReference>
<dbReference type="GO" id="GO:0019316">
    <property type="term" value="P:D-allose catabolic process"/>
    <property type="evidence" value="ECO:0007669"/>
    <property type="project" value="TreeGrafter"/>
</dbReference>
<dbReference type="GO" id="GO:0019388">
    <property type="term" value="P:galactose catabolic process"/>
    <property type="evidence" value="ECO:0007669"/>
    <property type="project" value="UniProtKB-UniPathway"/>
</dbReference>
<dbReference type="GO" id="GO:0019512">
    <property type="term" value="P:lactose catabolic process via tagatose-6-phosphate"/>
    <property type="evidence" value="ECO:0007669"/>
    <property type="project" value="UniProtKB-UniRule"/>
</dbReference>
<dbReference type="GO" id="GO:0009052">
    <property type="term" value="P:pentose-phosphate shunt, non-oxidative branch"/>
    <property type="evidence" value="ECO:0007669"/>
    <property type="project" value="TreeGrafter"/>
</dbReference>
<dbReference type="Gene3D" id="3.40.1400.10">
    <property type="entry name" value="Sugar-phosphate isomerase, RpiB/LacA/LacB"/>
    <property type="match status" value="1"/>
</dbReference>
<dbReference type="HAMAP" id="MF_01556">
    <property type="entry name" value="LacB"/>
    <property type="match status" value="1"/>
</dbReference>
<dbReference type="InterPro" id="IPR004784">
    <property type="entry name" value="LacB"/>
</dbReference>
<dbReference type="InterPro" id="IPR003500">
    <property type="entry name" value="RpiB_LacA_LacB"/>
</dbReference>
<dbReference type="InterPro" id="IPR036569">
    <property type="entry name" value="RpiB_LacA_LacB_sf"/>
</dbReference>
<dbReference type="NCBIfam" id="TIGR01119">
    <property type="entry name" value="lacB"/>
    <property type="match status" value="1"/>
</dbReference>
<dbReference type="NCBIfam" id="NF004051">
    <property type="entry name" value="PRK05571.1"/>
    <property type="match status" value="1"/>
</dbReference>
<dbReference type="NCBIfam" id="NF006381">
    <property type="entry name" value="PRK08622.1"/>
    <property type="match status" value="1"/>
</dbReference>
<dbReference type="NCBIfam" id="NF009258">
    <property type="entry name" value="PRK12615.1"/>
    <property type="match status" value="1"/>
</dbReference>
<dbReference type="NCBIfam" id="TIGR00689">
    <property type="entry name" value="rpiB_lacA_lacB"/>
    <property type="match status" value="1"/>
</dbReference>
<dbReference type="PANTHER" id="PTHR30345:SF0">
    <property type="entry name" value="DNA DAMAGE-REPAIR_TOLERATION PROTEIN DRT102"/>
    <property type="match status" value="1"/>
</dbReference>
<dbReference type="PANTHER" id="PTHR30345">
    <property type="entry name" value="RIBOSE-5-PHOSPHATE ISOMERASE B"/>
    <property type="match status" value="1"/>
</dbReference>
<dbReference type="Pfam" id="PF02502">
    <property type="entry name" value="LacAB_rpiB"/>
    <property type="match status" value="1"/>
</dbReference>
<dbReference type="PIRSF" id="PIRSF005384">
    <property type="entry name" value="RpiB_LacA_B"/>
    <property type="match status" value="1"/>
</dbReference>
<dbReference type="SUPFAM" id="SSF89623">
    <property type="entry name" value="Ribose/Galactose isomerase RpiB/AlsB"/>
    <property type="match status" value="1"/>
</dbReference>
<proteinExistence type="inferred from homology"/>
<comment type="catalytic activity">
    <reaction evidence="1">
        <text>aldehydo-D-galactose 6-phosphate = keto-D-tagatose 6-phosphate</text>
        <dbReference type="Rhea" id="RHEA:13033"/>
        <dbReference type="ChEBI" id="CHEBI:58255"/>
        <dbReference type="ChEBI" id="CHEBI:134283"/>
        <dbReference type="EC" id="5.3.1.26"/>
    </reaction>
</comment>
<comment type="pathway">
    <text evidence="1">Carbohydrate metabolism; D-galactose 6-phosphate degradation; D-tagatose 6-phosphate from D-galactose 6-phosphate: step 1/1.</text>
</comment>
<comment type="subunit">
    <text evidence="1">Heteromultimeric protein consisting of LacA and LacB.</text>
</comment>
<comment type="similarity">
    <text evidence="1">Belongs to the LacAB/RpiB family.</text>
</comment>
<organism>
    <name type="scientific">Staphylococcus aureus (strain JH1)</name>
    <dbReference type="NCBI Taxonomy" id="359787"/>
    <lineage>
        <taxon>Bacteria</taxon>
        <taxon>Bacillati</taxon>
        <taxon>Bacillota</taxon>
        <taxon>Bacilli</taxon>
        <taxon>Bacillales</taxon>
        <taxon>Staphylococcaceae</taxon>
        <taxon>Staphylococcus</taxon>
    </lineage>
</organism>